<accession>P17916</accession>
<reference key="1">
    <citation type="journal article" date="1984" name="Biochemistry">
        <title>Inactivation of the Pseudomonas striata broad specificity amino acid racemase by D and L isomers of beta-substituted alanines: kinetics, stoichiometry, active site peptide, and mechanistic studies.</title>
        <authorList>
            <person name="Roise D."/>
            <person name="Soda K."/>
            <person name="Yagi T."/>
            <person name="Walsh C.T."/>
        </authorList>
    </citation>
    <scope>PROTEIN SEQUENCE</scope>
    <scope>COFACTOR</scope>
    <source>
        <strain>DSM 3263 / NBRC 12996 / AKU 0813</strain>
    </source>
</reference>
<protein>
    <recommendedName>
        <fullName>Broad specificity amino acid racemase</fullName>
        <ecNumber>5.1.1.-</ecNumber>
    </recommendedName>
</protein>
<name>ALRX_PSEPU</name>
<organism>
    <name type="scientific">Pseudomonas putida</name>
    <name type="common">Arthrobacter siderocapsulatus</name>
    <dbReference type="NCBI Taxonomy" id="303"/>
    <lineage>
        <taxon>Bacteria</taxon>
        <taxon>Pseudomonadati</taxon>
        <taxon>Pseudomonadota</taxon>
        <taxon>Gammaproteobacteria</taxon>
        <taxon>Pseudomonadales</taxon>
        <taxon>Pseudomonadaceae</taxon>
        <taxon>Pseudomonas</taxon>
    </lineage>
</organism>
<comment type="cofactor">
    <cofactor evidence="2">
        <name>pyridoxal 5'-phosphate</name>
        <dbReference type="ChEBI" id="CHEBI:597326"/>
    </cofactor>
</comment>
<comment type="similarity">
    <text evidence="3">Belongs to the alanine racemase family.</text>
</comment>
<keyword id="KW-0903">Direct protein sequencing</keyword>
<keyword id="KW-0413">Isomerase</keyword>
<keyword id="KW-0663">Pyridoxal phosphate</keyword>
<dbReference type="EC" id="5.1.1.-"/>
<dbReference type="PIR" id="A29520">
    <property type="entry name" value="A29520"/>
</dbReference>
<dbReference type="GO" id="GO:0016853">
    <property type="term" value="F:isomerase activity"/>
    <property type="evidence" value="ECO:0007669"/>
    <property type="project" value="UniProtKB-KW"/>
</dbReference>
<dbReference type="PROSITE" id="PS00395">
    <property type="entry name" value="ALANINE_RACEMASE"/>
    <property type="match status" value="1"/>
</dbReference>
<feature type="chain" id="PRO_0000114549" description="Broad specificity amino acid racemase">
    <location>
        <begin position="1" status="less than"/>
        <end position="16" status="greater than"/>
    </location>
</feature>
<feature type="active site" description="Proton acceptor" evidence="1">
    <location>
        <position position="6"/>
    </location>
</feature>
<feature type="modified residue" description="N6-(pyridoxal phosphate)lysine">
    <location>
        <position position="6"/>
    </location>
</feature>
<feature type="non-terminal residue">
    <location>
        <position position="1"/>
    </location>
</feature>
<feature type="non-terminal residue">
    <location>
        <position position="16"/>
    </location>
</feature>
<proteinExistence type="evidence at protein level"/>
<evidence type="ECO:0000250" key="1"/>
<evidence type="ECO:0000269" key="2">
    <source>
    </source>
</evidence>
<evidence type="ECO:0000305" key="3"/>
<sequence length="16" mass="1573">LTAVLKADAYGXGIGL</sequence>